<name>PRMA_PSESM</name>
<protein>
    <recommendedName>
        <fullName evidence="1">Ribosomal protein L11 methyltransferase</fullName>
        <shortName evidence="1">L11 Mtase</shortName>
        <ecNumber evidence="1">2.1.1.-</ecNumber>
    </recommendedName>
</protein>
<gene>
    <name evidence="1" type="primary">prmA</name>
    <name type="ordered locus">PSPTO_4862</name>
</gene>
<accession>Q87VS3</accession>
<organism>
    <name type="scientific">Pseudomonas syringae pv. tomato (strain ATCC BAA-871 / DC3000)</name>
    <dbReference type="NCBI Taxonomy" id="223283"/>
    <lineage>
        <taxon>Bacteria</taxon>
        <taxon>Pseudomonadati</taxon>
        <taxon>Pseudomonadota</taxon>
        <taxon>Gammaproteobacteria</taxon>
        <taxon>Pseudomonadales</taxon>
        <taxon>Pseudomonadaceae</taxon>
        <taxon>Pseudomonas</taxon>
    </lineage>
</organism>
<proteinExistence type="inferred from homology"/>
<sequence>MPWLQVRLAISPEQAETYEDALLEVGAVSVTFMDAEDQPIFEPELNTTPLWTHTHLLALFEADTNAELALAHLSLLTGAELPEHSAEVIEDQDWERSWMDNFQPMCFGQRLWIVPSWHAAPQPDAVNLLLDPGLAFGTGTHPTTALCLEWLDGQDLKGCNVLDFGCGSGILAIAALLLGAEQAVGTDIDVQALEASRDNAGRNNIAAERFPLYLPEDLPPQQADVLVANILAGPLVSLAPQLTTLIKTGGRLALSGILAEQGEDVAAAYAESFDLDPIANRDGWVRITGRRR</sequence>
<feature type="chain" id="PRO_0000192294" description="Ribosomal protein L11 methyltransferase">
    <location>
        <begin position="1"/>
        <end position="292"/>
    </location>
</feature>
<feature type="binding site" evidence="1">
    <location>
        <position position="144"/>
    </location>
    <ligand>
        <name>S-adenosyl-L-methionine</name>
        <dbReference type="ChEBI" id="CHEBI:59789"/>
    </ligand>
</feature>
<feature type="binding site" evidence="1">
    <location>
        <position position="165"/>
    </location>
    <ligand>
        <name>S-adenosyl-L-methionine</name>
        <dbReference type="ChEBI" id="CHEBI:59789"/>
    </ligand>
</feature>
<feature type="binding site" evidence="1">
    <location>
        <position position="187"/>
    </location>
    <ligand>
        <name>S-adenosyl-L-methionine</name>
        <dbReference type="ChEBI" id="CHEBI:59789"/>
    </ligand>
</feature>
<feature type="binding site" evidence="1">
    <location>
        <position position="229"/>
    </location>
    <ligand>
        <name>S-adenosyl-L-methionine</name>
        <dbReference type="ChEBI" id="CHEBI:59789"/>
    </ligand>
</feature>
<dbReference type="EC" id="2.1.1.-" evidence="1"/>
<dbReference type="EMBL" id="AE016853">
    <property type="protein sequence ID" value="AAO58291.1"/>
    <property type="molecule type" value="Genomic_DNA"/>
</dbReference>
<dbReference type="RefSeq" id="NP_794596.1">
    <property type="nucleotide sequence ID" value="NC_004578.1"/>
</dbReference>
<dbReference type="RefSeq" id="WP_007244650.1">
    <property type="nucleotide sequence ID" value="NC_004578.1"/>
</dbReference>
<dbReference type="SMR" id="Q87VS3"/>
<dbReference type="STRING" id="223283.PSPTO_4862"/>
<dbReference type="GeneID" id="1186545"/>
<dbReference type="KEGG" id="pst:PSPTO_4862"/>
<dbReference type="PATRIC" id="fig|223283.9.peg.4974"/>
<dbReference type="eggNOG" id="COG2264">
    <property type="taxonomic scope" value="Bacteria"/>
</dbReference>
<dbReference type="HOGENOM" id="CLU_049382_4_1_6"/>
<dbReference type="OrthoDB" id="9785995at2"/>
<dbReference type="PhylomeDB" id="Q87VS3"/>
<dbReference type="Proteomes" id="UP000002515">
    <property type="component" value="Chromosome"/>
</dbReference>
<dbReference type="GO" id="GO:0005829">
    <property type="term" value="C:cytosol"/>
    <property type="evidence" value="ECO:0007669"/>
    <property type="project" value="TreeGrafter"/>
</dbReference>
<dbReference type="GO" id="GO:0016279">
    <property type="term" value="F:protein-lysine N-methyltransferase activity"/>
    <property type="evidence" value="ECO:0007669"/>
    <property type="project" value="TreeGrafter"/>
</dbReference>
<dbReference type="GO" id="GO:0032259">
    <property type="term" value="P:methylation"/>
    <property type="evidence" value="ECO:0007669"/>
    <property type="project" value="UniProtKB-KW"/>
</dbReference>
<dbReference type="CDD" id="cd02440">
    <property type="entry name" value="AdoMet_MTases"/>
    <property type="match status" value="1"/>
</dbReference>
<dbReference type="Gene3D" id="3.40.50.150">
    <property type="entry name" value="Vaccinia Virus protein VP39"/>
    <property type="match status" value="1"/>
</dbReference>
<dbReference type="HAMAP" id="MF_00735">
    <property type="entry name" value="Methyltr_PrmA"/>
    <property type="match status" value="1"/>
</dbReference>
<dbReference type="InterPro" id="IPR050078">
    <property type="entry name" value="Ribosomal_L11_MeTrfase_PrmA"/>
</dbReference>
<dbReference type="InterPro" id="IPR004498">
    <property type="entry name" value="Ribosomal_PrmA_MeTrfase"/>
</dbReference>
<dbReference type="InterPro" id="IPR029063">
    <property type="entry name" value="SAM-dependent_MTases_sf"/>
</dbReference>
<dbReference type="NCBIfam" id="TIGR00406">
    <property type="entry name" value="prmA"/>
    <property type="match status" value="1"/>
</dbReference>
<dbReference type="PANTHER" id="PTHR43648">
    <property type="entry name" value="ELECTRON TRANSFER FLAVOPROTEIN BETA SUBUNIT LYSINE METHYLTRANSFERASE"/>
    <property type="match status" value="1"/>
</dbReference>
<dbReference type="PANTHER" id="PTHR43648:SF1">
    <property type="entry name" value="ELECTRON TRANSFER FLAVOPROTEIN BETA SUBUNIT LYSINE METHYLTRANSFERASE"/>
    <property type="match status" value="1"/>
</dbReference>
<dbReference type="Pfam" id="PF06325">
    <property type="entry name" value="PrmA"/>
    <property type="match status" value="1"/>
</dbReference>
<dbReference type="PIRSF" id="PIRSF000401">
    <property type="entry name" value="RPL11_MTase"/>
    <property type="match status" value="1"/>
</dbReference>
<dbReference type="SUPFAM" id="SSF53335">
    <property type="entry name" value="S-adenosyl-L-methionine-dependent methyltransferases"/>
    <property type="match status" value="1"/>
</dbReference>
<evidence type="ECO:0000255" key="1">
    <source>
        <dbReference type="HAMAP-Rule" id="MF_00735"/>
    </source>
</evidence>
<comment type="function">
    <text evidence="1">Methylates ribosomal protein L11.</text>
</comment>
<comment type="catalytic activity">
    <reaction evidence="1">
        <text>L-lysyl-[protein] + 3 S-adenosyl-L-methionine = N(6),N(6),N(6)-trimethyl-L-lysyl-[protein] + 3 S-adenosyl-L-homocysteine + 3 H(+)</text>
        <dbReference type="Rhea" id="RHEA:54192"/>
        <dbReference type="Rhea" id="RHEA-COMP:9752"/>
        <dbReference type="Rhea" id="RHEA-COMP:13826"/>
        <dbReference type="ChEBI" id="CHEBI:15378"/>
        <dbReference type="ChEBI" id="CHEBI:29969"/>
        <dbReference type="ChEBI" id="CHEBI:57856"/>
        <dbReference type="ChEBI" id="CHEBI:59789"/>
        <dbReference type="ChEBI" id="CHEBI:61961"/>
    </reaction>
</comment>
<comment type="subcellular location">
    <subcellularLocation>
        <location evidence="1">Cytoplasm</location>
    </subcellularLocation>
</comment>
<comment type="similarity">
    <text evidence="1">Belongs to the methyltransferase superfamily. PrmA family.</text>
</comment>
<keyword id="KW-0963">Cytoplasm</keyword>
<keyword id="KW-0489">Methyltransferase</keyword>
<keyword id="KW-1185">Reference proteome</keyword>
<keyword id="KW-0949">S-adenosyl-L-methionine</keyword>
<keyword id="KW-0808">Transferase</keyword>
<reference key="1">
    <citation type="journal article" date="2003" name="Proc. Natl. Acad. Sci. U.S.A.">
        <title>The complete genome sequence of the Arabidopsis and tomato pathogen Pseudomonas syringae pv. tomato DC3000.</title>
        <authorList>
            <person name="Buell C.R."/>
            <person name="Joardar V."/>
            <person name="Lindeberg M."/>
            <person name="Selengut J."/>
            <person name="Paulsen I.T."/>
            <person name="Gwinn M.L."/>
            <person name="Dodson R.J."/>
            <person name="DeBoy R.T."/>
            <person name="Durkin A.S."/>
            <person name="Kolonay J.F."/>
            <person name="Madupu R."/>
            <person name="Daugherty S.C."/>
            <person name="Brinkac L.M."/>
            <person name="Beanan M.J."/>
            <person name="Haft D.H."/>
            <person name="Nelson W.C."/>
            <person name="Davidsen T.M."/>
            <person name="Zafar N."/>
            <person name="Zhou L."/>
            <person name="Liu J."/>
            <person name="Yuan Q."/>
            <person name="Khouri H.M."/>
            <person name="Fedorova N.B."/>
            <person name="Tran B."/>
            <person name="Russell D."/>
            <person name="Berry K.J."/>
            <person name="Utterback T.R."/>
            <person name="Van Aken S.E."/>
            <person name="Feldblyum T.V."/>
            <person name="D'Ascenzo M."/>
            <person name="Deng W.-L."/>
            <person name="Ramos A.R."/>
            <person name="Alfano J.R."/>
            <person name="Cartinhour S."/>
            <person name="Chatterjee A.K."/>
            <person name="Delaney T.P."/>
            <person name="Lazarowitz S.G."/>
            <person name="Martin G.B."/>
            <person name="Schneider D.J."/>
            <person name="Tang X."/>
            <person name="Bender C.L."/>
            <person name="White O."/>
            <person name="Fraser C.M."/>
            <person name="Collmer A."/>
        </authorList>
    </citation>
    <scope>NUCLEOTIDE SEQUENCE [LARGE SCALE GENOMIC DNA]</scope>
    <source>
        <strain>ATCC BAA-871 / DC3000</strain>
    </source>
</reference>